<comment type="function">
    <text evidence="1">Digests double-stranded RNA. Involved in the processing of primary rRNA transcript to yield the immediate precursors to the large and small rRNAs (23S and 16S). Processes some mRNAs, and tRNAs when they are encoded in the rRNA operon. Processes pre-crRNA and tracrRNA of type II CRISPR loci if present in the organism.</text>
</comment>
<comment type="catalytic activity">
    <reaction evidence="1">
        <text>Endonucleolytic cleavage to 5'-phosphomonoester.</text>
        <dbReference type="EC" id="3.1.26.3"/>
    </reaction>
</comment>
<comment type="cofactor">
    <cofactor evidence="1">
        <name>Mg(2+)</name>
        <dbReference type="ChEBI" id="CHEBI:18420"/>
    </cofactor>
</comment>
<comment type="subunit">
    <text evidence="1">Homodimer.</text>
</comment>
<comment type="subcellular location">
    <subcellularLocation>
        <location evidence="1">Cytoplasm</location>
    </subcellularLocation>
</comment>
<comment type="similarity">
    <text evidence="1">Belongs to the ribonuclease III family.</text>
</comment>
<feature type="chain" id="PRO_1000075761" description="Ribonuclease 3">
    <location>
        <begin position="1"/>
        <end position="227"/>
    </location>
</feature>
<feature type="domain" description="RNase III" evidence="1">
    <location>
        <begin position="4"/>
        <end position="126"/>
    </location>
</feature>
<feature type="domain" description="DRBM" evidence="1">
    <location>
        <begin position="153"/>
        <end position="226"/>
    </location>
</feature>
<feature type="active site" evidence="1">
    <location>
        <position position="43"/>
    </location>
</feature>
<feature type="active site" evidence="1">
    <location>
        <position position="115"/>
    </location>
</feature>
<feature type="binding site" evidence="1">
    <location>
        <position position="39"/>
    </location>
    <ligand>
        <name>Mg(2+)</name>
        <dbReference type="ChEBI" id="CHEBI:18420"/>
    </ligand>
</feature>
<feature type="binding site" evidence="1">
    <location>
        <position position="112"/>
    </location>
    <ligand>
        <name>Mg(2+)</name>
        <dbReference type="ChEBI" id="CHEBI:18420"/>
    </ligand>
</feature>
<feature type="binding site" evidence="1">
    <location>
        <position position="115"/>
    </location>
    <ligand>
        <name>Mg(2+)</name>
        <dbReference type="ChEBI" id="CHEBI:18420"/>
    </ligand>
</feature>
<reference key="1">
    <citation type="journal article" date="2007" name="Genome Biol.">
        <title>Characterization and modeling of the Haemophilus influenzae core and supragenomes based on the complete genomic sequences of Rd and 12 clinical nontypeable strains.</title>
        <authorList>
            <person name="Hogg J.S."/>
            <person name="Hu F.Z."/>
            <person name="Janto B."/>
            <person name="Boissy R."/>
            <person name="Hayes J."/>
            <person name="Keefe R."/>
            <person name="Post J.C."/>
            <person name="Ehrlich G.D."/>
        </authorList>
    </citation>
    <scope>NUCLEOTIDE SEQUENCE [LARGE SCALE GENOMIC DNA]</scope>
    <source>
        <strain>PittEE</strain>
    </source>
</reference>
<keyword id="KW-0963">Cytoplasm</keyword>
<keyword id="KW-0255">Endonuclease</keyword>
<keyword id="KW-0378">Hydrolase</keyword>
<keyword id="KW-0460">Magnesium</keyword>
<keyword id="KW-0479">Metal-binding</keyword>
<keyword id="KW-0507">mRNA processing</keyword>
<keyword id="KW-0540">Nuclease</keyword>
<keyword id="KW-0694">RNA-binding</keyword>
<keyword id="KW-0698">rRNA processing</keyword>
<keyword id="KW-0699">rRNA-binding</keyword>
<keyword id="KW-0819">tRNA processing</keyword>
<evidence type="ECO:0000255" key="1">
    <source>
        <dbReference type="HAMAP-Rule" id="MF_00104"/>
    </source>
</evidence>
<organism>
    <name type="scientific">Haemophilus influenzae (strain PittEE)</name>
    <dbReference type="NCBI Taxonomy" id="374930"/>
    <lineage>
        <taxon>Bacteria</taxon>
        <taxon>Pseudomonadati</taxon>
        <taxon>Pseudomonadota</taxon>
        <taxon>Gammaproteobacteria</taxon>
        <taxon>Pasteurellales</taxon>
        <taxon>Pasteurellaceae</taxon>
        <taxon>Haemophilus</taxon>
    </lineage>
</organism>
<sequence length="227" mass="25603">MNHLDRLERKIGYCFNDIALLKQALTHRSAATQHNERLEFLGDSILNFTIAEALYHQFPRCNEGELSRMRATLVREPTLAILARQFELGDYMSLGSGELKNGGFRRESILADCVEAIIGAMSLDQGLAVTTQVIRNWYQQLLAEIKPGDNQKDAKTRLQEYLQGKHLPLPTYEVVNIQGEAHCQIFTVECKVKSAGKIDRTFVAKGSSRRKAEQAAAEQILKELDIK</sequence>
<protein>
    <recommendedName>
        <fullName evidence="1">Ribonuclease 3</fullName>
        <ecNumber evidence="1">3.1.26.3</ecNumber>
    </recommendedName>
    <alternativeName>
        <fullName evidence="1">Ribonuclease III</fullName>
        <shortName evidence="1">RNase III</shortName>
    </alternativeName>
</protein>
<gene>
    <name evidence="1" type="primary">rnc</name>
    <name type="ordered locus">CGSHiEE_03240</name>
</gene>
<dbReference type="EC" id="3.1.26.3" evidence="1"/>
<dbReference type="EMBL" id="CP000671">
    <property type="protein sequence ID" value="ABQ98075.1"/>
    <property type="molecule type" value="Genomic_DNA"/>
</dbReference>
<dbReference type="SMR" id="A5UBC4"/>
<dbReference type="KEGG" id="hip:CGSHiEE_03240"/>
<dbReference type="HOGENOM" id="CLU_000907_1_1_6"/>
<dbReference type="GO" id="GO:0005737">
    <property type="term" value="C:cytoplasm"/>
    <property type="evidence" value="ECO:0007669"/>
    <property type="project" value="UniProtKB-SubCell"/>
</dbReference>
<dbReference type="GO" id="GO:0003725">
    <property type="term" value="F:double-stranded RNA binding"/>
    <property type="evidence" value="ECO:0007669"/>
    <property type="project" value="TreeGrafter"/>
</dbReference>
<dbReference type="GO" id="GO:0046872">
    <property type="term" value="F:metal ion binding"/>
    <property type="evidence" value="ECO:0007669"/>
    <property type="project" value="UniProtKB-KW"/>
</dbReference>
<dbReference type="GO" id="GO:0004525">
    <property type="term" value="F:ribonuclease III activity"/>
    <property type="evidence" value="ECO:0007669"/>
    <property type="project" value="UniProtKB-UniRule"/>
</dbReference>
<dbReference type="GO" id="GO:0019843">
    <property type="term" value="F:rRNA binding"/>
    <property type="evidence" value="ECO:0007669"/>
    <property type="project" value="UniProtKB-KW"/>
</dbReference>
<dbReference type="GO" id="GO:0006397">
    <property type="term" value="P:mRNA processing"/>
    <property type="evidence" value="ECO:0007669"/>
    <property type="project" value="UniProtKB-UniRule"/>
</dbReference>
<dbReference type="GO" id="GO:0010468">
    <property type="term" value="P:regulation of gene expression"/>
    <property type="evidence" value="ECO:0007669"/>
    <property type="project" value="TreeGrafter"/>
</dbReference>
<dbReference type="GO" id="GO:0006364">
    <property type="term" value="P:rRNA processing"/>
    <property type="evidence" value="ECO:0007669"/>
    <property type="project" value="UniProtKB-UniRule"/>
</dbReference>
<dbReference type="GO" id="GO:0008033">
    <property type="term" value="P:tRNA processing"/>
    <property type="evidence" value="ECO:0007669"/>
    <property type="project" value="UniProtKB-KW"/>
</dbReference>
<dbReference type="CDD" id="cd10845">
    <property type="entry name" value="DSRM_RNAse_III_family"/>
    <property type="match status" value="1"/>
</dbReference>
<dbReference type="CDD" id="cd00593">
    <property type="entry name" value="RIBOc"/>
    <property type="match status" value="1"/>
</dbReference>
<dbReference type="FunFam" id="1.10.1520.10:FF:000001">
    <property type="entry name" value="Ribonuclease 3"/>
    <property type="match status" value="1"/>
</dbReference>
<dbReference type="FunFam" id="3.30.160.20:FF:000003">
    <property type="entry name" value="Ribonuclease 3"/>
    <property type="match status" value="1"/>
</dbReference>
<dbReference type="Gene3D" id="3.30.160.20">
    <property type="match status" value="1"/>
</dbReference>
<dbReference type="Gene3D" id="1.10.1520.10">
    <property type="entry name" value="Ribonuclease III domain"/>
    <property type="match status" value="1"/>
</dbReference>
<dbReference type="HAMAP" id="MF_00104">
    <property type="entry name" value="RNase_III"/>
    <property type="match status" value="1"/>
</dbReference>
<dbReference type="InterPro" id="IPR014720">
    <property type="entry name" value="dsRBD_dom"/>
</dbReference>
<dbReference type="InterPro" id="IPR011907">
    <property type="entry name" value="RNase_III"/>
</dbReference>
<dbReference type="InterPro" id="IPR000999">
    <property type="entry name" value="RNase_III_dom"/>
</dbReference>
<dbReference type="InterPro" id="IPR036389">
    <property type="entry name" value="RNase_III_sf"/>
</dbReference>
<dbReference type="NCBIfam" id="TIGR02191">
    <property type="entry name" value="RNaseIII"/>
    <property type="match status" value="1"/>
</dbReference>
<dbReference type="PANTHER" id="PTHR11207:SF0">
    <property type="entry name" value="RIBONUCLEASE 3"/>
    <property type="match status" value="1"/>
</dbReference>
<dbReference type="PANTHER" id="PTHR11207">
    <property type="entry name" value="RIBONUCLEASE III"/>
    <property type="match status" value="1"/>
</dbReference>
<dbReference type="Pfam" id="PF00035">
    <property type="entry name" value="dsrm"/>
    <property type="match status" value="1"/>
</dbReference>
<dbReference type="Pfam" id="PF14622">
    <property type="entry name" value="Ribonucleas_3_3"/>
    <property type="match status" value="1"/>
</dbReference>
<dbReference type="SMART" id="SM00358">
    <property type="entry name" value="DSRM"/>
    <property type="match status" value="1"/>
</dbReference>
<dbReference type="SMART" id="SM00535">
    <property type="entry name" value="RIBOc"/>
    <property type="match status" value="1"/>
</dbReference>
<dbReference type="SUPFAM" id="SSF54768">
    <property type="entry name" value="dsRNA-binding domain-like"/>
    <property type="match status" value="1"/>
</dbReference>
<dbReference type="SUPFAM" id="SSF69065">
    <property type="entry name" value="RNase III domain-like"/>
    <property type="match status" value="1"/>
</dbReference>
<dbReference type="PROSITE" id="PS50137">
    <property type="entry name" value="DS_RBD"/>
    <property type="match status" value="1"/>
</dbReference>
<dbReference type="PROSITE" id="PS00517">
    <property type="entry name" value="RNASE_3_1"/>
    <property type="match status" value="1"/>
</dbReference>
<dbReference type="PROSITE" id="PS50142">
    <property type="entry name" value="RNASE_3_2"/>
    <property type="match status" value="1"/>
</dbReference>
<proteinExistence type="inferred from homology"/>
<accession>A5UBC4</accession>
<name>RNC_HAEIE</name>